<comment type="function">
    <text evidence="1">Transcription factor that acts by binding directly to the RNA polymerase (RNAP). Required for negative regulation of rRNA expression and positive regulation of several amino acid biosynthesis promoters. Also required for regulation of fis expression.</text>
</comment>
<comment type="subunit">
    <text evidence="1">Interacts directly with the RNA polymerase.</text>
</comment>
<comment type="subcellular location">
    <subcellularLocation>
        <location evidence="1">Cytoplasm</location>
    </subcellularLocation>
</comment>
<comment type="similarity">
    <text evidence="1">Belongs to the DksA family.</text>
</comment>
<feature type="chain" id="PRO_0000187539" description="RNA polymerase-binding transcription factor DksA">
    <location>
        <begin position="1"/>
        <end position="151"/>
    </location>
</feature>
<feature type="zinc finger region" description="dksA C4-type" evidence="1">
    <location>
        <begin position="114"/>
        <end position="138"/>
    </location>
</feature>
<feature type="coiled-coil region" evidence="1">
    <location>
        <begin position="34"/>
        <end position="54"/>
    </location>
</feature>
<feature type="binding site" evidence="1">
    <location>
        <position position="114"/>
    </location>
    <ligand>
        <name>Zn(2+)</name>
        <dbReference type="ChEBI" id="CHEBI:29105"/>
    </ligand>
</feature>
<feature type="binding site" evidence="1">
    <location>
        <position position="117"/>
    </location>
    <ligand>
        <name>Zn(2+)</name>
        <dbReference type="ChEBI" id="CHEBI:29105"/>
    </ligand>
</feature>
<feature type="binding site" evidence="1">
    <location>
        <position position="135"/>
    </location>
    <ligand>
        <name>Zn(2+)</name>
        <dbReference type="ChEBI" id="CHEBI:29105"/>
    </ligand>
</feature>
<feature type="binding site" evidence="1">
    <location>
        <position position="138"/>
    </location>
    <ligand>
        <name>Zn(2+)</name>
        <dbReference type="ChEBI" id="CHEBI:29105"/>
    </ligand>
</feature>
<reference key="1">
    <citation type="journal article" date="2001" name="Nature">
        <title>Complete genome sequence of a multiple drug resistant Salmonella enterica serovar Typhi CT18.</title>
        <authorList>
            <person name="Parkhill J."/>
            <person name="Dougan G."/>
            <person name="James K.D."/>
            <person name="Thomson N.R."/>
            <person name="Pickard D."/>
            <person name="Wain J."/>
            <person name="Churcher C.M."/>
            <person name="Mungall K.L."/>
            <person name="Bentley S.D."/>
            <person name="Holden M.T.G."/>
            <person name="Sebaihia M."/>
            <person name="Baker S."/>
            <person name="Basham D."/>
            <person name="Brooks K."/>
            <person name="Chillingworth T."/>
            <person name="Connerton P."/>
            <person name="Cronin A."/>
            <person name="Davis P."/>
            <person name="Davies R.M."/>
            <person name="Dowd L."/>
            <person name="White N."/>
            <person name="Farrar J."/>
            <person name="Feltwell T."/>
            <person name="Hamlin N."/>
            <person name="Haque A."/>
            <person name="Hien T.T."/>
            <person name="Holroyd S."/>
            <person name="Jagels K."/>
            <person name="Krogh A."/>
            <person name="Larsen T.S."/>
            <person name="Leather S."/>
            <person name="Moule S."/>
            <person name="O'Gaora P."/>
            <person name="Parry C."/>
            <person name="Quail M.A."/>
            <person name="Rutherford K.M."/>
            <person name="Simmonds M."/>
            <person name="Skelton J."/>
            <person name="Stevens K."/>
            <person name="Whitehead S."/>
            <person name="Barrell B.G."/>
        </authorList>
    </citation>
    <scope>NUCLEOTIDE SEQUENCE [LARGE SCALE GENOMIC DNA]</scope>
    <source>
        <strain>CT18</strain>
    </source>
</reference>
<reference key="2">
    <citation type="journal article" date="2003" name="J. Bacteriol.">
        <title>Comparative genomics of Salmonella enterica serovar Typhi strains Ty2 and CT18.</title>
        <authorList>
            <person name="Deng W."/>
            <person name="Liou S.-R."/>
            <person name="Plunkett G. III"/>
            <person name="Mayhew G.F."/>
            <person name="Rose D.J."/>
            <person name="Burland V."/>
            <person name="Kodoyianni V."/>
            <person name="Schwartz D.C."/>
            <person name="Blattner F.R."/>
        </authorList>
    </citation>
    <scope>NUCLEOTIDE SEQUENCE [LARGE SCALE GENOMIC DNA]</scope>
    <source>
        <strain>ATCC 700931 / Ty2</strain>
    </source>
</reference>
<dbReference type="EMBL" id="AL513382">
    <property type="protein sequence ID" value="CAD01347.1"/>
    <property type="molecule type" value="Genomic_DNA"/>
</dbReference>
<dbReference type="EMBL" id="AE014613">
    <property type="protein sequence ID" value="AAO67926.1"/>
    <property type="molecule type" value="Genomic_DNA"/>
</dbReference>
<dbReference type="RefSeq" id="NP_454802.1">
    <property type="nucleotide sequence ID" value="NC_003198.1"/>
</dbReference>
<dbReference type="RefSeq" id="WP_001155232.1">
    <property type="nucleotide sequence ID" value="NZ_WSUR01000009.1"/>
</dbReference>
<dbReference type="SMR" id="P0A1G6"/>
<dbReference type="STRING" id="220341.gene:17584249"/>
<dbReference type="GeneID" id="97600371"/>
<dbReference type="KEGG" id="stt:t0194"/>
<dbReference type="KEGG" id="sty:STY0211"/>
<dbReference type="PATRIC" id="fig|220341.7.peg.214"/>
<dbReference type="eggNOG" id="COG1734">
    <property type="taxonomic scope" value="Bacteria"/>
</dbReference>
<dbReference type="HOGENOM" id="CLU_043144_2_0_6"/>
<dbReference type="OMA" id="EENVNHP"/>
<dbReference type="OrthoDB" id="9803742at2"/>
<dbReference type="Proteomes" id="UP000000541">
    <property type="component" value="Chromosome"/>
</dbReference>
<dbReference type="Proteomes" id="UP000002670">
    <property type="component" value="Chromosome"/>
</dbReference>
<dbReference type="GO" id="GO:0005737">
    <property type="term" value="C:cytoplasm"/>
    <property type="evidence" value="ECO:0007669"/>
    <property type="project" value="UniProtKB-SubCell"/>
</dbReference>
<dbReference type="GO" id="GO:0008270">
    <property type="term" value="F:zinc ion binding"/>
    <property type="evidence" value="ECO:0007669"/>
    <property type="project" value="UniProtKB-UniRule"/>
</dbReference>
<dbReference type="GO" id="GO:0010468">
    <property type="term" value="P:regulation of gene expression"/>
    <property type="evidence" value="ECO:0007669"/>
    <property type="project" value="UniProtKB-UniRule"/>
</dbReference>
<dbReference type="FunFam" id="1.20.120.910:FF:000001">
    <property type="entry name" value="RNA polymerase-binding transcription factor DksA"/>
    <property type="match status" value="1"/>
</dbReference>
<dbReference type="Gene3D" id="1.20.120.910">
    <property type="entry name" value="DksA, coiled-coil domain"/>
    <property type="match status" value="1"/>
</dbReference>
<dbReference type="HAMAP" id="MF_00926">
    <property type="entry name" value="DksA"/>
    <property type="match status" value="1"/>
</dbReference>
<dbReference type="InterPro" id="IPR048489">
    <property type="entry name" value="DksA_N"/>
</dbReference>
<dbReference type="InterPro" id="IPR012784">
    <property type="entry name" value="DksA_RNA_pol-bd"/>
</dbReference>
<dbReference type="InterPro" id="IPR037187">
    <property type="entry name" value="DnaK_N"/>
</dbReference>
<dbReference type="InterPro" id="IPR020460">
    <property type="entry name" value="Znf_C4-type_bac"/>
</dbReference>
<dbReference type="InterPro" id="IPR000962">
    <property type="entry name" value="Znf_DskA_TraR"/>
</dbReference>
<dbReference type="InterPro" id="IPR020458">
    <property type="entry name" value="Znf_DskA_TraR_CS"/>
</dbReference>
<dbReference type="NCBIfam" id="TIGR02420">
    <property type="entry name" value="dksA"/>
    <property type="match status" value="1"/>
</dbReference>
<dbReference type="NCBIfam" id="NF008045">
    <property type="entry name" value="PRK10778.1"/>
    <property type="match status" value="1"/>
</dbReference>
<dbReference type="PANTHER" id="PTHR33823:SF2">
    <property type="entry name" value="RNA POLYMERASE-BINDING TRANSCRIPTION FACTOR DKSA"/>
    <property type="match status" value="1"/>
</dbReference>
<dbReference type="PANTHER" id="PTHR33823">
    <property type="entry name" value="RNA POLYMERASE-BINDING TRANSCRIPTION FACTOR DKSA-RELATED"/>
    <property type="match status" value="1"/>
</dbReference>
<dbReference type="Pfam" id="PF21157">
    <property type="entry name" value="DksA_N"/>
    <property type="match status" value="1"/>
</dbReference>
<dbReference type="Pfam" id="PF01258">
    <property type="entry name" value="zf-dskA_traR"/>
    <property type="match status" value="1"/>
</dbReference>
<dbReference type="PRINTS" id="PR00618">
    <property type="entry name" value="DKSAZNFINGER"/>
</dbReference>
<dbReference type="SUPFAM" id="SSF109635">
    <property type="entry name" value="DnaK suppressor protein DksA, alpha-hairpin domain"/>
    <property type="match status" value="1"/>
</dbReference>
<dbReference type="SUPFAM" id="SSF57716">
    <property type="entry name" value="Glucocorticoid receptor-like (DNA-binding domain)"/>
    <property type="match status" value="1"/>
</dbReference>
<dbReference type="PROSITE" id="PS01102">
    <property type="entry name" value="ZF_DKSA_1"/>
    <property type="match status" value="1"/>
</dbReference>
<dbReference type="PROSITE" id="PS51128">
    <property type="entry name" value="ZF_DKSA_2"/>
    <property type="match status" value="1"/>
</dbReference>
<sequence>MQEGQNRKTSSLSILAIAGVEPYQEKPGEEYMNEAQLSHFKRILEAWRNQLRDEVDRTVTHMQDEAANFPDPVDRAAQEEEFSLELRNRDRERKLIKKIEKTLKKVEDEDFGYCESCGVEIGIRRLEARPTADLCIDCKTLAEIREKQMAG</sequence>
<organism>
    <name type="scientific">Salmonella typhi</name>
    <dbReference type="NCBI Taxonomy" id="90370"/>
    <lineage>
        <taxon>Bacteria</taxon>
        <taxon>Pseudomonadati</taxon>
        <taxon>Pseudomonadota</taxon>
        <taxon>Gammaproteobacteria</taxon>
        <taxon>Enterobacterales</taxon>
        <taxon>Enterobacteriaceae</taxon>
        <taxon>Salmonella</taxon>
    </lineage>
</organism>
<keyword id="KW-0175">Coiled coil</keyword>
<keyword id="KW-0963">Cytoplasm</keyword>
<keyword id="KW-0479">Metal-binding</keyword>
<keyword id="KW-0862">Zinc</keyword>
<keyword id="KW-0863">Zinc-finger</keyword>
<protein>
    <recommendedName>
        <fullName evidence="1">RNA polymerase-binding transcription factor DksA</fullName>
    </recommendedName>
</protein>
<accession>P0A1G6</accession>
<accession>Q9ZIW3</accession>
<evidence type="ECO:0000255" key="1">
    <source>
        <dbReference type="HAMAP-Rule" id="MF_00926"/>
    </source>
</evidence>
<name>DKSA_SALTI</name>
<gene>
    <name evidence="1" type="primary">dksA</name>
    <name type="ordered locus">STY0211</name>
    <name type="ordered locus">t0194</name>
</gene>
<proteinExistence type="inferred from homology"/>